<accession>Q6G8F6</accession>
<dbReference type="EMBL" id="BX571857">
    <property type="protein sequence ID" value="CAG43500.1"/>
    <property type="status" value="ALT_INIT"/>
    <property type="molecule type" value="Genomic_DNA"/>
</dbReference>
<dbReference type="RefSeq" id="WP_000989115.1">
    <property type="nucleotide sequence ID" value="NC_002953.3"/>
</dbReference>
<dbReference type="SMR" id="Q6G8F6"/>
<dbReference type="KEGG" id="sas:SAS1697"/>
<dbReference type="HOGENOM" id="CLU_043931_1_0_9"/>
<dbReference type="GO" id="GO:0005886">
    <property type="term" value="C:plasma membrane"/>
    <property type="evidence" value="ECO:0007669"/>
    <property type="project" value="UniProtKB-SubCell"/>
</dbReference>
<dbReference type="GO" id="GO:0015105">
    <property type="term" value="F:arsenite transmembrane transporter activity"/>
    <property type="evidence" value="ECO:0007669"/>
    <property type="project" value="InterPro"/>
</dbReference>
<dbReference type="GO" id="GO:0046685">
    <property type="term" value="P:response to arsenic-containing substance"/>
    <property type="evidence" value="ECO:0007669"/>
    <property type="project" value="UniProtKB-KW"/>
</dbReference>
<dbReference type="CDD" id="cd01118">
    <property type="entry name" value="ArsB_permease"/>
    <property type="match status" value="1"/>
</dbReference>
<dbReference type="InterPro" id="IPR000802">
    <property type="entry name" value="Arsenical_pump_ArsB"/>
</dbReference>
<dbReference type="NCBIfam" id="TIGR00935">
    <property type="entry name" value="2a45"/>
    <property type="match status" value="1"/>
</dbReference>
<dbReference type="NCBIfam" id="NF033877">
    <property type="entry name" value="arsB_Sta_pI258"/>
    <property type="match status" value="1"/>
</dbReference>
<dbReference type="NCBIfam" id="NF011980">
    <property type="entry name" value="PRK15445.1"/>
    <property type="match status" value="1"/>
</dbReference>
<dbReference type="PANTHER" id="PTHR43302">
    <property type="entry name" value="TRANSPORTER ARSB-RELATED"/>
    <property type="match status" value="1"/>
</dbReference>
<dbReference type="PANTHER" id="PTHR43302:SF5">
    <property type="entry name" value="TRANSPORTER ARSB-RELATED"/>
    <property type="match status" value="1"/>
</dbReference>
<dbReference type="Pfam" id="PF02040">
    <property type="entry name" value="ArsB"/>
    <property type="match status" value="1"/>
</dbReference>
<dbReference type="PRINTS" id="PR00758">
    <property type="entry name" value="ARSENICPUMP"/>
</dbReference>
<protein>
    <recommendedName>
        <fullName>Arsenical pump membrane protein</fullName>
    </recommendedName>
    <alternativeName>
        <fullName>Arsenic efflux pump protein</fullName>
    </alternativeName>
</protein>
<keyword id="KW-0059">Arsenical resistance</keyword>
<keyword id="KW-1003">Cell membrane</keyword>
<keyword id="KW-0472">Membrane</keyword>
<keyword id="KW-0812">Transmembrane</keyword>
<keyword id="KW-1133">Transmembrane helix</keyword>
<keyword id="KW-0813">Transport</keyword>
<sequence>MTTLATLIFLVTLLFVLWQPKGLDIGITALTGAFIAVITGVVSFSDVFEVTGIVWNATLTFVSVILISLILDKVGLFEWSAIHMLHASKGNGLKMFAYIILLGAIVAAFFANDGAALILTPIVLAMVKNIGFSKRAIFPFIIASGFIADTTSLPLIVSNLVNIISADYFHIGFIRYFSRMIIPNLFSLLASIIVLWLYFRKAIPKTFDDNNIKHPKDAINDLKLFKISWIVLVILLFGYLISEFTKIPVSIFTGIIAFIFLMLARKSNALNIKQVIKGAPWNIVLFSIGMYIVVFGLRNAGITLILAKILEYISNYGLFSTILGMGFISAFLSSIMNNMPTVLIDAIAIGQSNVHGMLKEGLIYANVIGSDLGPKITPIGSLATLLWLHVLTQKDVKISWGTYFKTGIIITIPVLFITLIGLYLTLIIF</sequence>
<feature type="chain" id="PRO_0000201474" description="Arsenical pump membrane protein">
    <location>
        <begin position="1"/>
        <end position="429"/>
    </location>
</feature>
<feature type="transmembrane region" description="Helical" evidence="1">
    <location>
        <begin position="3"/>
        <end position="23"/>
    </location>
</feature>
<feature type="transmembrane region" description="Helical" evidence="1">
    <location>
        <begin position="25"/>
        <end position="45"/>
    </location>
</feature>
<feature type="transmembrane region" description="Helical" evidence="1">
    <location>
        <begin position="50"/>
        <end position="70"/>
    </location>
</feature>
<feature type="transmembrane region" description="Helical" evidence="1">
    <location>
        <begin position="99"/>
        <end position="119"/>
    </location>
</feature>
<feature type="transmembrane region" description="Helical" evidence="1">
    <location>
        <begin position="137"/>
        <end position="157"/>
    </location>
</feature>
<feature type="transmembrane region" description="Helical" evidence="1">
    <location>
        <begin position="180"/>
        <end position="200"/>
    </location>
</feature>
<feature type="transmembrane region" description="Helical" evidence="1">
    <location>
        <begin position="222"/>
        <end position="242"/>
    </location>
</feature>
<feature type="transmembrane region" description="Helical" evidence="1">
    <location>
        <begin position="244"/>
        <end position="264"/>
    </location>
</feature>
<feature type="transmembrane region" description="Helical" evidence="1">
    <location>
        <begin position="275"/>
        <end position="295"/>
    </location>
</feature>
<feature type="transmembrane region" description="Helical" evidence="1">
    <location>
        <begin position="316"/>
        <end position="336"/>
    </location>
</feature>
<feature type="transmembrane region" description="Helical" evidence="1">
    <location>
        <begin position="372"/>
        <end position="392"/>
    </location>
</feature>
<feature type="transmembrane region" description="Helical" evidence="1">
    <location>
        <begin position="408"/>
        <end position="428"/>
    </location>
</feature>
<organism>
    <name type="scientific">Staphylococcus aureus (strain MSSA476)</name>
    <dbReference type="NCBI Taxonomy" id="282459"/>
    <lineage>
        <taxon>Bacteria</taxon>
        <taxon>Bacillati</taxon>
        <taxon>Bacillota</taxon>
        <taxon>Bacilli</taxon>
        <taxon>Bacillales</taxon>
        <taxon>Staphylococcaceae</taxon>
        <taxon>Staphylococcus</taxon>
    </lineage>
</organism>
<comment type="function">
    <text>Involved in arsenical resistance. Thought to form the channel of an arsenite pump.</text>
</comment>
<comment type="subcellular location">
    <subcellularLocation>
        <location evidence="2">Cell membrane</location>
        <topology evidence="2">Multi-pass membrane protein</topology>
    </subcellularLocation>
</comment>
<comment type="similarity">
    <text evidence="2">Belongs to the ArsB family.</text>
</comment>
<comment type="sequence caution" evidence="2">
    <conflict type="erroneous initiation">
        <sequence resource="EMBL-CDS" id="CAG43500"/>
    </conflict>
</comment>
<name>ARSB_STAAS</name>
<evidence type="ECO:0000255" key="1"/>
<evidence type="ECO:0000305" key="2"/>
<reference key="1">
    <citation type="journal article" date="2004" name="Proc. Natl. Acad. Sci. U.S.A.">
        <title>Complete genomes of two clinical Staphylococcus aureus strains: evidence for the rapid evolution of virulence and drug resistance.</title>
        <authorList>
            <person name="Holden M.T.G."/>
            <person name="Feil E.J."/>
            <person name="Lindsay J.A."/>
            <person name="Peacock S.J."/>
            <person name="Day N.P.J."/>
            <person name="Enright M.C."/>
            <person name="Foster T.J."/>
            <person name="Moore C.E."/>
            <person name="Hurst L."/>
            <person name="Atkin R."/>
            <person name="Barron A."/>
            <person name="Bason N."/>
            <person name="Bentley S.D."/>
            <person name="Chillingworth C."/>
            <person name="Chillingworth T."/>
            <person name="Churcher C."/>
            <person name="Clark L."/>
            <person name="Corton C."/>
            <person name="Cronin A."/>
            <person name="Doggett J."/>
            <person name="Dowd L."/>
            <person name="Feltwell T."/>
            <person name="Hance Z."/>
            <person name="Harris B."/>
            <person name="Hauser H."/>
            <person name="Holroyd S."/>
            <person name="Jagels K."/>
            <person name="James K.D."/>
            <person name="Lennard N."/>
            <person name="Line A."/>
            <person name="Mayes R."/>
            <person name="Moule S."/>
            <person name="Mungall K."/>
            <person name="Ormond D."/>
            <person name="Quail M.A."/>
            <person name="Rabbinowitsch E."/>
            <person name="Rutherford K.M."/>
            <person name="Sanders M."/>
            <person name="Sharp S."/>
            <person name="Simmonds M."/>
            <person name="Stevens K."/>
            <person name="Whitehead S."/>
            <person name="Barrell B.G."/>
            <person name="Spratt B.G."/>
            <person name="Parkhill J."/>
        </authorList>
    </citation>
    <scope>NUCLEOTIDE SEQUENCE [LARGE SCALE GENOMIC DNA]</scope>
    <source>
        <strain>MSSA476</strain>
    </source>
</reference>
<gene>
    <name type="primary">arsB</name>
    <name type="ordered locus">SAS1697</name>
</gene>
<proteinExistence type="inferred from homology"/>